<organism>
    <name type="scientific">Shewanella amazonensis (strain ATCC BAA-1098 / SB2B)</name>
    <dbReference type="NCBI Taxonomy" id="326297"/>
    <lineage>
        <taxon>Bacteria</taxon>
        <taxon>Pseudomonadati</taxon>
        <taxon>Pseudomonadota</taxon>
        <taxon>Gammaproteobacteria</taxon>
        <taxon>Alteromonadales</taxon>
        <taxon>Shewanellaceae</taxon>
        <taxon>Shewanella</taxon>
    </lineage>
</organism>
<keyword id="KW-0963">Cytoplasm</keyword>
<keyword id="KW-0378">Hydrolase</keyword>
<keyword id="KW-1185">Reference proteome</keyword>
<keyword id="KW-0694">RNA-binding</keyword>
<keyword id="KW-0820">tRNA-binding</keyword>
<sequence length="195" mass="21331">MCDIKLIVGLANPGAEYAQTRHNAGAWYVEELARIANVSLAPDPKYFGLTARAILCGKDVRLLIPSTFMNLSGKSVAALANFFRIEPEQILVAHDELDMEPGVARFKLGGGHGGHNGLKDIIAKMGNNKNFYRLRIGIGHPGDKNKVSGYVLGKAPATEQEKMNAAIDEAVRSTEILFKQDMTKAMHRLHSFKAE</sequence>
<accession>A1S8R8</accession>
<evidence type="ECO:0000255" key="1">
    <source>
        <dbReference type="HAMAP-Rule" id="MF_00083"/>
    </source>
</evidence>
<feature type="chain" id="PRO_1000010646" description="Peptidyl-tRNA hydrolase">
    <location>
        <begin position="1"/>
        <end position="195"/>
    </location>
</feature>
<feature type="active site" description="Proton acceptor" evidence="1">
    <location>
        <position position="22"/>
    </location>
</feature>
<feature type="binding site" evidence="1">
    <location>
        <position position="17"/>
    </location>
    <ligand>
        <name>tRNA</name>
        <dbReference type="ChEBI" id="CHEBI:17843"/>
    </ligand>
</feature>
<feature type="binding site" evidence="1">
    <location>
        <position position="68"/>
    </location>
    <ligand>
        <name>tRNA</name>
        <dbReference type="ChEBI" id="CHEBI:17843"/>
    </ligand>
</feature>
<feature type="binding site" evidence="1">
    <location>
        <position position="70"/>
    </location>
    <ligand>
        <name>tRNA</name>
        <dbReference type="ChEBI" id="CHEBI:17843"/>
    </ligand>
</feature>
<feature type="binding site" evidence="1">
    <location>
        <position position="116"/>
    </location>
    <ligand>
        <name>tRNA</name>
        <dbReference type="ChEBI" id="CHEBI:17843"/>
    </ligand>
</feature>
<feature type="site" description="Discriminates between blocked and unblocked aminoacyl-tRNA" evidence="1">
    <location>
        <position position="12"/>
    </location>
</feature>
<feature type="site" description="Stabilizes the basic form of H active site to accept a proton" evidence="1">
    <location>
        <position position="95"/>
    </location>
</feature>
<reference key="1">
    <citation type="submission" date="2006-12" db="EMBL/GenBank/DDBJ databases">
        <title>Complete sequence of Shewanella amazonensis SB2B.</title>
        <authorList>
            <consortium name="US DOE Joint Genome Institute"/>
            <person name="Copeland A."/>
            <person name="Lucas S."/>
            <person name="Lapidus A."/>
            <person name="Barry K."/>
            <person name="Detter J.C."/>
            <person name="Glavina del Rio T."/>
            <person name="Hammon N."/>
            <person name="Israni S."/>
            <person name="Dalin E."/>
            <person name="Tice H."/>
            <person name="Pitluck S."/>
            <person name="Munk A.C."/>
            <person name="Brettin T."/>
            <person name="Bruce D."/>
            <person name="Han C."/>
            <person name="Tapia R."/>
            <person name="Gilna P."/>
            <person name="Schmutz J."/>
            <person name="Larimer F."/>
            <person name="Land M."/>
            <person name="Hauser L."/>
            <person name="Kyrpides N."/>
            <person name="Mikhailova N."/>
            <person name="Fredrickson J."/>
            <person name="Richardson P."/>
        </authorList>
    </citation>
    <scope>NUCLEOTIDE SEQUENCE [LARGE SCALE GENOMIC DNA]</scope>
    <source>
        <strain>ATCC BAA-1098 / SB2B</strain>
    </source>
</reference>
<proteinExistence type="inferred from homology"/>
<gene>
    <name evidence="1" type="primary">pth</name>
    <name type="ordered locus">Sama_2572</name>
</gene>
<name>PTH_SHEAM</name>
<comment type="function">
    <text evidence="1">Hydrolyzes ribosome-free peptidyl-tRNAs (with 1 or more amino acids incorporated), which drop off the ribosome during protein synthesis, or as a result of ribosome stalling.</text>
</comment>
<comment type="function">
    <text evidence="1">Catalyzes the release of premature peptidyl moieties from peptidyl-tRNA molecules trapped in stalled 50S ribosomal subunits, and thus maintains levels of free tRNAs and 50S ribosomes.</text>
</comment>
<comment type="catalytic activity">
    <reaction evidence="1">
        <text>an N-acyl-L-alpha-aminoacyl-tRNA + H2O = an N-acyl-L-amino acid + a tRNA + H(+)</text>
        <dbReference type="Rhea" id="RHEA:54448"/>
        <dbReference type="Rhea" id="RHEA-COMP:10123"/>
        <dbReference type="Rhea" id="RHEA-COMP:13883"/>
        <dbReference type="ChEBI" id="CHEBI:15377"/>
        <dbReference type="ChEBI" id="CHEBI:15378"/>
        <dbReference type="ChEBI" id="CHEBI:59874"/>
        <dbReference type="ChEBI" id="CHEBI:78442"/>
        <dbReference type="ChEBI" id="CHEBI:138191"/>
        <dbReference type="EC" id="3.1.1.29"/>
    </reaction>
</comment>
<comment type="subunit">
    <text evidence="1">Monomer.</text>
</comment>
<comment type="subcellular location">
    <subcellularLocation>
        <location evidence="1">Cytoplasm</location>
    </subcellularLocation>
</comment>
<comment type="similarity">
    <text evidence="1">Belongs to the PTH family.</text>
</comment>
<protein>
    <recommendedName>
        <fullName evidence="1">Peptidyl-tRNA hydrolase</fullName>
        <shortName evidence="1">Pth</shortName>
        <ecNumber evidence="1">3.1.1.29</ecNumber>
    </recommendedName>
</protein>
<dbReference type="EC" id="3.1.1.29" evidence="1"/>
<dbReference type="EMBL" id="CP000507">
    <property type="protein sequence ID" value="ABM00775.1"/>
    <property type="molecule type" value="Genomic_DNA"/>
</dbReference>
<dbReference type="RefSeq" id="WP_011760681.1">
    <property type="nucleotide sequence ID" value="NC_008700.1"/>
</dbReference>
<dbReference type="SMR" id="A1S8R8"/>
<dbReference type="STRING" id="326297.Sama_2572"/>
<dbReference type="KEGG" id="saz:Sama_2572"/>
<dbReference type="eggNOG" id="COG0193">
    <property type="taxonomic scope" value="Bacteria"/>
</dbReference>
<dbReference type="HOGENOM" id="CLU_062456_3_1_6"/>
<dbReference type="OrthoDB" id="9800507at2"/>
<dbReference type="Proteomes" id="UP000009175">
    <property type="component" value="Chromosome"/>
</dbReference>
<dbReference type="GO" id="GO:0005737">
    <property type="term" value="C:cytoplasm"/>
    <property type="evidence" value="ECO:0007669"/>
    <property type="project" value="UniProtKB-SubCell"/>
</dbReference>
<dbReference type="GO" id="GO:0004045">
    <property type="term" value="F:peptidyl-tRNA hydrolase activity"/>
    <property type="evidence" value="ECO:0007669"/>
    <property type="project" value="UniProtKB-UniRule"/>
</dbReference>
<dbReference type="GO" id="GO:0000049">
    <property type="term" value="F:tRNA binding"/>
    <property type="evidence" value="ECO:0007669"/>
    <property type="project" value="UniProtKB-UniRule"/>
</dbReference>
<dbReference type="GO" id="GO:0006515">
    <property type="term" value="P:protein quality control for misfolded or incompletely synthesized proteins"/>
    <property type="evidence" value="ECO:0007669"/>
    <property type="project" value="UniProtKB-UniRule"/>
</dbReference>
<dbReference type="GO" id="GO:0072344">
    <property type="term" value="P:rescue of stalled ribosome"/>
    <property type="evidence" value="ECO:0007669"/>
    <property type="project" value="UniProtKB-UniRule"/>
</dbReference>
<dbReference type="CDD" id="cd00462">
    <property type="entry name" value="PTH"/>
    <property type="match status" value="1"/>
</dbReference>
<dbReference type="FunFam" id="3.40.50.1470:FF:000001">
    <property type="entry name" value="Peptidyl-tRNA hydrolase"/>
    <property type="match status" value="1"/>
</dbReference>
<dbReference type="Gene3D" id="3.40.50.1470">
    <property type="entry name" value="Peptidyl-tRNA hydrolase"/>
    <property type="match status" value="1"/>
</dbReference>
<dbReference type="HAMAP" id="MF_00083">
    <property type="entry name" value="Pept_tRNA_hydro_bact"/>
    <property type="match status" value="1"/>
</dbReference>
<dbReference type="InterPro" id="IPR001328">
    <property type="entry name" value="Pept_tRNA_hydro"/>
</dbReference>
<dbReference type="InterPro" id="IPR018171">
    <property type="entry name" value="Pept_tRNA_hydro_CS"/>
</dbReference>
<dbReference type="InterPro" id="IPR036416">
    <property type="entry name" value="Pept_tRNA_hydro_sf"/>
</dbReference>
<dbReference type="NCBIfam" id="TIGR00447">
    <property type="entry name" value="pth"/>
    <property type="match status" value="1"/>
</dbReference>
<dbReference type="PANTHER" id="PTHR17224">
    <property type="entry name" value="PEPTIDYL-TRNA HYDROLASE"/>
    <property type="match status" value="1"/>
</dbReference>
<dbReference type="PANTHER" id="PTHR17224:SF1">
    <property type="entry name" value="PEPTIDYL-TRNA HYDROLASE"/>
    <property type="match status" value="1"/>
</dbReference>
<dbReference type="Pfam" id="PF01195">
    <property type="entry name" value="Pept_tRNA_hydro"/>
    <property type="match status" value="1"/>
</dbReference>
<dbReference type="SUPFAM" id="SSF53178">
    <property type="entry name" value="Peptidyl-tRNA hydrolase-like"/>
    <property type="match status" value="1"/>
</dbReference>
<dbReference type="PROSITE" id="PS01195">
    <property type="entry name" value="PEPT_TRNA_HYDROL_1"/>
    <property type="match status" value="1"/>
</dbReference>
<dbReference type="PROSITE" id="PS01196">
    <property type="entry name" value="PEPT_TRNA_HYDROL_2"/>
    <property type="match status" value="1"/>
</dbReference>